<comment type="similarity">
    <text evidence="1">Belongs to the bacterial ribosomal protein bL28 family.</text>
</comment>
<accession>B3PLS0</accession>
<dbReference type="EMBL" id="CP001047">
    <property type="protein sequence ID" value="ACF06972.1"/>
    <property type="molecule type" value="Genomic_DNA"/>
</dbReference>
<dbReference type="RefSeq" id="WP_012497929.1">
    <property type="nucleotide sequence ID" value="NC_011025.1"/>
</dbReference>
<dbReference type="SMR" id="B3PLS0"/>
<dbReference type="STRING" id="243272.MARTH_orf005"/>
<dbReference type="KEGG" id="mat:MARTH_orf005"/>
<dbReference type="eggNOG" id="COG0227">
    <property type="taxonomic scope" value="Bacteria"/>
</dbReference>
<dbReference type="HOGENOM" id="CLU_064548_7_2_14"/>
<dbReference type="Proteomes" id="UP000008812">
    <property type="component" value="Chromosome"/>
</dbReference>
<dbReference type="GO" id="GO:1990904">
    <property type="term" value="C:ribonucleoprotein complex"/>
    <property type="evidence" value="ECO:0007669"/>
    <property type="project" value="UniProtKB-KW"/>
</dbReference>
<dbReference type="GO" id="GO:0005840">
    <property type="term" value="C:ribosome"/>
    <property type="evidence" value="ECO:0007669"/>
    <property type="project" value="UniProtKB-KW"/>
</dbReference>
<dbReference type="GO" id="GO:0003735">
    <property type="term" value="F:structural constituent of ribosome"/>
    <property type="evidence" value="ECO:0007669"/>
    <property type="project" value="InterPro"/>
</dbReference>
<dbReference type="GO" id="GO:0006412">
    <property type="term" value="P:translation"/>
    <property type="evidence" value="ECO:0007669"/>
    <property type="project" value="UniProtKB-UniRule"/>
</dbReference>
<dbReference type="Gene3D" id="2.30.170.40">
    <property type="entry name" value="Ribosomal protein L28/L24"/>
    <property type="match status" value="1"/>
</dbReference>
<dbReference type="HAMAP" id="MF_00373">
    <property type="entry name" value="Ribosomal_bL28"/>
    <property type="match status" value="1"/>
</dbReference>
<dbReference type="InterPro" id="IPR050096">
    <property type="entry name" value="Bacterial_rp_bL28"/>
</dbReference>
<dbReference type="InterPro" id="IPR026569">
    <property type="entry name" value="Ribosomal_bL28"/>
</dbReference>
<dbReference type="InterPro" id="IPR034704">
    <property type="entry name" value="Ribosomal_bL28/bL31-like_sf"/>
</dbReference>
<dbReference type="InterPro" id="IPR001383">
    <property type="entry name" value="Ribosomal_bL28_bact-type"/>
</dbReference>
<dbReference type="InterPro" id="IPR037147">
    <property type="entry name" value="Ribosomal_bL28_sf"/>
</dbReference>
<dbReference type="NCBIfam" id="TIGR00009">
    <property type="entry name" value="L28"/>
    <property type="match status" value="1"/>
</dbReference>
<dbReference type="PANTHER" id="PTHR39080">
    <property type="entry name" value="50S RIBOSOMAL PROTEIN L28"/>
    <property type="match status" value="1"/>
</dbReference>
<dbReference type="PANTHER" id="PTHR39080:SF1">
    <property type="entry name" value="LARGE RIBOSOMAL SUBUNIT PROTEIN BL28A"/>
    <property type="match status" value="1"/>
</dbReference>
<dbReference type="Pfam" id="PF00830">
    <property type="entry name" value="Ribosomal_L28"/>
    <property type="match status" value="1"/>
</dbReference>
<dbReference type="SUPFAM" id="SSF143800">
    <property type="entry name" value="L28p-like"/>
    <property type="match status" value="1"/>
</dbReference>
<name>RL28_META1</name>
<gene>
    <name evidence="1" type="primary">rpmB</name>
    <name type="ordered locus">MARTH_orf005</name>
</gene>
<proteinExistence type="inferred from homology"/>
<organism>
    <name type="scientific">Metamycoplasma arthritidis (strain 158L3-1)</name>
    <name type="common">Mycoplasma arthritidis</name>
    <dbReference type="NCBI Taxonomy" id="243272"/>
    <lineage>
        <taxon>Bacteria</taxon>
        <taxon>Bacillati</taxon>
        <taxon>Mycoplasmatota</taxon>
        <taxon>Mycoplasmoidales</taxon>
        <taxon>Metamycoplasmataceae</taxon>
        <taxon>Metamycoplasma</taxon>
    </lineage>
</organism>
<sequence length="65" mass="7160">MPGRDQLTGQKALSGNKRSHALNTTKRTFDLNLQKVTVLQENGTKKTLRVTAKNARTLKKLGLVA</sequence>
<protein>
    <recommendedName>
        <fullName evidence="1">Large ribosomal subunit protein bL28</fullName>
    </recommendedName>
    <alternativeName>
        <fullName evidence="3">50S ribosomal protein L28</fullName>
    </alternativeName>
</protein>
<feature type="chain" id="PRO_1000121659" description="Large ribosomal subunit protein bL28">
    <location>
        <begin position="1"/>
        <end position="65"/>
    </location>
</feature>
<feature type="region of interest" description="Disordered" evidence="2">
    <location>
        <begin position="1"/>
        <end position="21"/>
    </location>
</feature>
<keyword id="KW-1185">Reference proteome</keyword>
<keyword id="KW-0687">Ribonucleoprotein</keyword>
<keyword id="KW-0689">Ribosomal protein</keyword>
<evidence type="ECO:0000255" key="1">
    <source>
        <dbReference type="HAMAP-Rule" id="MF_00373"/>
    </source>
</evidence>
<evidence type="ECO:0000256" key="2">
    <source>
        <dbReference type="SAM" id="MobiDB-lite"/>
    </source>
</evidence>
<evidence type="ECO:0000305" key="3"/>
<reference key="1">
    <citation type="journal article" date="2008" name="Infect. Immun.">
        <title>Genome of Mycoplasma arthritidis.</title>
        <authorList>
            <person name="Dybvig K."/>
            <person name="Zuhua C."/>
            <person name="Lao P."/>
            <person name="Jordan D.S."/>
            <person name="French C.T."/>
            <person name="Tu A.H."/>
            <person name="Loraine A.E."/>
        </authorList>
    </citation>
    <scope>NUCLEOTIDE SEQUENCE [LARGE SCALE GENOMIC DNA]</scope>
    <source>
        <strain>158L3-1</strain>
    </source>
</reference>